<sequence length="551" mass="63758">MLARPETDTSVDYYAILKLQKNATFQQIRKQYLFLALQYHPDRNPGDEERAVKRFQRLQLAHEVLSDATKRLIYDQLFGLSTRTRSQYKPNSTSNPSKHTSAYASYNKGKNSKWSSPFASTTKKPQESSEKYSKKSSTRKKEHFNKKPSFPRDTEYSHIYNMKYDPRSGIGIRVKRQEPESLKKENNNSDYLPKSAMKQKKGGPKDSSKHPSNDGKIPESKPSVYKSRASNLFSSNEQSIHSSFGSKFHFDKSSNPFSFEFSPSSNAAKPSNSEECNIPKFNSSFKTSNDFFTFTKTEESSPYSFSFKLEDSNTPKFKSSSKPVKSSFVFTKPEAESSNPFSFDFGSSGPKSRSDTRNNIRTPLWTSSVFEKPESDLPNKTAFGFMRSNTSTFNQKCDDFSSASFMKEKTEFEEQLQEDNDHSLGDLFSKINISTESPSVAMPSIPVIQPPSFPIFSSIDFNVRNREYWNQLMVFQKLYSKYCTESQHFINSWINIKKELHIVPVNWEIFEKVEKSWDQCEEFVAEFRQTEEKYFLFLKRLRELINKNQML</sequence>
<reference key="1">
    <citation type="journal article" date="2002" name="Nature">
        <title>The genome sequence of Schizosaccharomyces pombe.</title>
        <authorList>
            <person name="Wood V."/>
            <person name="Gwilliam R."/>
            <person name="Rajandream M.A."/>
            <person name="Lyne M.H."/>
            <person name="Lyne R."/>
            <person name="Stewart A."/>
            <person name="Sgouros J.G."/>
            <person name="Peat N."/>
            <person name="Hayles J."/>
            <person name="Baker S.G."/>
            <person name="Basham D."/>
            <person name="Bowman S."/>
            <person name="Brooks K."/>
            <person name="Brown D."/>
            <person name="Brown S."/>
            <person name="Chillingworth T."/>
            <person name="Churcher C.M."/>
            <person name="Collins M."/>
            <person name="Connor R."/>
            <person name="Cronin A."/>
            <person name="Davis P."/>
            <person name="Feltwell T."/>
            <person name="Fraser A."/>
            <person name="Gentles S."/>
            <person name="Goble A."/>
            <person name="Hamlin N."/>
            <person name="Harris D.E."/>
            <person name="Hidalgo J."/>
            <person name="Hodgson G."/>
            <person name="Holroyd S."/>
            <person name="Hornsby T."/>
            <person name="Howarth S."/>
            <person name="Huckle E.J."/>
            <person name="Hunt S."/>
            <person name="Jagels K."/>
            <person name="James K.D."/>
            <person name="Jones L."/>
            <person name="Jones M."/>
            <person name="Leather S."/>
            <person name="McDonald S."/>
            <person name="McLean J."/>
            <person name="Mooney P."/>
            <person name="Moule S."/>
            <person name="Mungall K.L."/>
            <person name="Murphy L.D."/>
            <person name="Niblett D."/>
            <person name="Odell C."/>
            <person name="Oliver K."/>
            <person name="O'Neil S."/>
            <person name="Pearson D."/>
            <person name="Quail M.A."/>
            <person name="Rabbinowitsch E."/>
            <person name="Rutherford K.M."/>
            <person name="Rutter S."/>
            <person name="Saunders D."/>
            <person name="Seeger K."/>
            <person name="Sharp S."/>
            <person name="Skelton J."/>
            <person name="Simmonds M.N."/>
            <person name="Squares R."/>
            <person name="Squares S."/>
            <person name="Stevens K."/>
            <person name="Taylor K."/>
            <person name="Taylor R.G."/>
            <person name="Tivey A."/>
            <person name="Walsh S.V."/>
            <person name="Warren T."/>
            <person name="Whitehead S."/>
            <person name="Woodward J.R."/>
            <person name="Volckaert G."/>
            <person name="Aert R."/>
            <person name="Robben J."/>
            <person name="Grymonprez B."/>
            <person name="Weltjens I."/>
            <person name="Vanstreels E."/>
            <person name="Rieger M."/>
            <person name="Schaefer M."/>
            <person name="Mueller-Auer S."/>
            <person name="Gabel C."/>
            <person name="Fuchs M."/>
            <person name="Duesterhoeft A."/>
            <person name="Fritzc C."/>
            <person name="Holzer E."/>
            <person name="Moestl D."/>
            <person name="Hilbert H."/>
            <person name="Borzym K."/>
            <person name="Langer I."/>
            <person name="Beck A."/>
            <person name="Lehrach H."/>
            <person name="Reinhardt R."/>
            <person name="Pohl T.M."/>
            <person name="Eger P."/>
            <person name="Zimmermann W."/>
            <person name="Wedler H."/>
            <person name="Wambutt R."/>
            <person name="Purnelle B."/>
            <person name="Goffeau A."/>
            <person name="Cadieu E."/>
            <person name="Dreano S."/>
            <person name="Gloux S."/>
            <person name="Lelaure V."/>
            <person name="Mottier S."/>
            <person name="Galibert F."/>
            <person name="Aves S.J."/>
            <person name="Xiang Z."/>
            <person name="Hunt C."/>
            <person name="Moore K."/>
            <person name="Hurst S.M."/>
            <person name="Lucas M."/>
            <person name="Rochet M."/>
            <person name="Gaillardin C."/>
            <person name="Tallada V.A."/>
            <person name="Garzon A."/>
            <person name="Thode G."/>
            <person name="Daga R.R."/>
            <person name="Cruzado L."/>
            <person name="Jimenez J."/>
            <person name="Sanchez M."/>
            <person name="del Rey F."/>
            <person name="Benito J."/>
            <person name="Dominguez A."/>
            <person name="Revuelta J.L."/>
            <person name="Moreno S."/>
            <person name="Armstrong J."/>
            <person name="Forsburg S.L."/>
            <person name="Cerutti L."/>
            <person name="Lowe T."/>
            <person name="McCombie W.R."/>
            <person name="Paulsen I."/>
            <person name="Potashkin J."/>
            <person name="Shpakovski G.V."/>
            <person name="Ussery D."/>
            <person name="Barrell B.G."/>
            <person name="Nurse P."/>
        </authorList>
    </citation>
    <scope>NUCLEOTIDE SEQUENCE [LARGE SCALE GENOMIC DNA]</scope>
    <source>
        <strain>972 / ATCC 24843</strain>
    </source>
</reference>
<reference key="2">
    <citation type="journal article" date="2005" name="Curr. Biol.">
        <title>A large-scale screen in S. pombe identifies seven novel genes required for critical meiotic events.</title>
        <authorList>
            <person name="Martin-Castellanos C."/>
            <person name="Blanco M."/>
            <person name="Rozalen A.E."/>
            <person name="Perez-Hidalgo L."/>
            <person name="Garcia A.I."/>
            <person name="Conde F."/>
            <person name="Mata J."/>
            <person name="Ellermeier C."/>
            <person name="Davis L."/>
            <person name="San-Segundo P."/>
            <person name="Smith G.R."/>
            <person name="Moreno S."/>
        </authorList>
    </citation>
    <scope>FUNCTION IN SPORULATION</scope>
</reference>
<reference key="3">
    <citation type="journal article" date="2006" name="Nat. Biotechnol.">
        <title>ORFeome cloning and global analysis of protein localization in the fission yeast Schizosaccharomyces pombe.</title>
        <authorList>
            <person name="Matsuyama A."/>
            <person name="Arai R."/>
            <person name="Yashiroda Y."/>
            <person name="Shirai A."/>
            <person name="Kamata A."/>
            <person name="Sekido S."/>
            <person name="Kobayashi Y."/>
            <person name="Hashimoto A."/>
            <person name="Hamamoto M."/>
            <person name="Hiraoka Y."/>
            <person name="Horinouchi S."/>
            <person name="Yoshida M."/>
        </authorList>
    </citation>
    <scope>SUBCELLULAR LOCATION [LARGE SCALE ANALYSIS]</scope>
</reference>
<organism>
    <name type="scientific">Schizosaccharomyces pombe (strain 972 / ATCC 24843)</name>
    <name type="common">Fission yeast</name>
    <dbReference type="NCBI Taxonomy" id="284812"/>
    <lineage>
        <taxon>Eukaryota</taxon>
        <taxon>Fungi</taxon>
        <taxon>Dikarya</taxon>
        <taxon>Ascomycota</taxon>
        <taxon>Taphrinomycotina</taxon>
        <taxon>Schizosaccharomycetes</taxon>
        <taxon>Schizosaccharomycetales</taxon>
        <taxon>Schizosaccharomycetaceae</taxon>
        <taxon>Schizosaccharomyces</taxon>
    </lineage>
</organism>
<proteinExistence type="evidence at protein level"/>
<dbReference type="EMBL" id="CU329671">
    <property type="protein sequence ID" value="CAA21914.2"/>
    <property type="molecule type" value="Genomic_DNA"/>
</dbReference>
<dbReference type="PIR" id="T39674">
    <property type="entry name" value="T39674"/>
</dbReference>
<dbReference type="RefSeq" id="NP_595124.1">
    <property type="nucleotide sequence ID" value="NM_001021031.2"/>
</dbReference>
<dbReference type="SMR" id="O94566"/>
<dbReference type="BioGRID" id="276560">
    <property type="interactions" value="10"/>
</dbReference>
<dbReference type="STRING" id="284812.O94566"/>
<dbReference type="iPTMnet" id="O94566"/>
<dbReference type="PaxDb" id="4896-SPBC1773.09c.1"/>
<dbReference type="EnsemblFungi" id="SPBC1773.09c.1">
    <property type="protein sequence ID" value="SPBC1773.09c.1:pep"/>
    <property type="gene ID" value="SPBC1773.09c"/>
</dbReference>
<dbReference type="GeneID" id="2540016"/>
<dbReference type="KEGG" id="spo:2540016"/>
<dbReference type="PomBase" id="SPBC1773.09c">
    <property type="gene designation" value="mug184"/>
</dbReference>
<dbReference type="VEuPathDB" id="FungiDB:SPBC1773.09c"/>
<dbReference type="eggNOG" id="KOG0714">
    <property type="taxonomic scope" value="Eukaryota"/>
</dbReference>
<dbReference type="HOGENOM" id="CLU_494457_0_0_1"/>
<dbReference type="InParanoid" id="O94566"/>
<dbReference type="OMA" id="INSWINI"/>
<dbReference type="PRO" id="PR:O94566"/>
<dbReference type="Proteomes" id="UP000002485">
    <property type="component" value="Chromosome II"/>
</dbReference>
<dbReference type="GO" id="GO:0005737">
    <property type="term" value="C:cytoplasm"/>
    <property type="evidence" value="ECO:0007005"/>
    <property type="project" value="PomBase"/>
</dbReference>
<dbReference type="GO" id="GO:0005829">
    <property type="term" value="C:cytosol"/>
    <property type="evidence" value="ECO:0007005"/>
    <property type="project" value="PomBase"/>
</dbReference>
<dbReference type="GO" id="GO:0005874">
    <property type="term" value="C:microtubule"/>
    <property type="evidence" value="ECO:0007669"/>
    <property type="project" value="UniProtKB-KW"/>
</dbReference>
<dbReference type="GO" id="GO:0015630">
    <property type="term" value="C:microtubule cytoskeleton"/>
    <property type="evidence" value="ECO:0007005"/>
    <property type="project" value="PomBase"/>
</dbReference>
<dbReference type="GO" id="GO:0030544">
    <property type="term" value="F:Hsp70 protein binding"/>
    <property type="evidence" value="ECO:0000255"/>
    <property type="project" value="PomBase"/>
</dbReference>
<dbReference type="GO" id="GO:0006887">
    <property type="term" value="P:exocytosis"/>
    <property type="evidence" value="ECO:0000250"/>
    <property type="project" value="PomBase"/>
</dbReference>
<dbReference type="GO" id="GO:0030435">
    <property type="term" value="P:sporulation resulting in formation of a cellular spore"/>
    <property type="evidence" value="ECO:0007669"/>
    <property type="project" value="UniProtKB-KW"/>
</dbReference>
<dbReference type="CDD" id="cd06257">
    <property type="entry name" value="DnaJ"/>
    <property type="match status" value="1"/>
</dbReference>
<dbReference type="FunFam" id="1.10.287.110:FF:000096">
    <property type="entry name" value="DnaJ domain protein"/>
    <property type="match status" value="1"/>
</dbReference>
<dbReference type="Gene3D" id="1.10.287.110">
    <property type="entry name" value="DnaJ domain"/>
    <property type="match status" value="1"/>
</dbReference>
<dbReference type="InterPro" id="IPR051938">
    <property type="entry name" value="Apopto_cytoskel_mod"/>
</dbReference>
<dbReference type="InterPro" id="IPR001623">
    <property type="entry name" value="DnaJ_domain"/>
</dbReference>
<dbReference type="InterPro" id="IPR018253">
    <property type="entry name" value="DnaJ_domain_CS"/>
</dbReference>
<dbReference type="InterPro" id="IPR036869">
    <property type="entry name" value="J_dom_sf"/>
</dbReference>
<dbReference type="PANTHER" id="PTHR44145">
    <property type="entry name" value="DNAJ HOMOLOG SUBFAMILY A MEMBER 3, MITOCHONDRIAL"/>
    <property type="match status" value="1"/>
</dbReference>
<dbReference type="PANTHER" id="PTHR44145:SF3">
    <property type="entry name" value="DNAJ HOMOLOG SUBFAMILY A MEMBER 3, MITOCHONDRIAL"/>
    <property type="match status" value="1"/>
</dbReference>
<dbReference type="Pfam" id="PF00226">
    <property type="entry name" value="DnaJ"/>
    <property type="match status" value="1"/>
</dbReference>
<dbReference type="PRINTS" id="PR00625">
    <property type="entry name" value="JDOMAIN"/>
</dbReference>
<dbReference type="SMART" id="SM00271">
    <property type="entry name" value="DnaJ"/>
    <property type="match status" value="1"/>
</dbReference>
<dbReference type="SUPFAM" id="SSF46565">
    <property type="entry name" value="Chaperone J-domain"/>
    <property type="match status" value="1"/>
</dbReference>
<dbReference type="PROSITE" id="PS00636">
    <property type="entry name" value="DNAJ_1"/>
    <property type="match status" value="1"/>
</dbReference>
<dbReference type="PROSITE" id="PS50076">
    <property type="entry name" value="DNAJ_2"/>
    <property type="match status" value="1"/>
</dbReference>
<feature type="chain" id="PRO_0000278520" description="Meiotically up-regulated gene 184 protein">
    <location>
        <begin position="1"/>
        <end position="551"/>
    </location>
</feature>
<feature type="domain" description="J" evidence="1">
    <location>
        <begin position="12"/>
        <end position="78"/>
    </location>
</feature>
<feature type="region of interest" description="Disordered" evidence="2">
    <location>
        <begin position="85"/>
        <end position="153"/>
    </location>
</feature>
<feature type="region of interest" description="Disordered" evidence="2">
    <location>
        <begin position="176"/>
        <end position="226"/>
    </location>
</feature>
<feature type="region of interest" description="Disordered" evidence="2">
    <location>
        <begin position="334"/>
        <end position="359"/>
    </location>
</feature>
<feature type="compositionally biased region" description="Polar residues" evidence="2">
    <location>
        <begin position="85"/>
        <end position="122"/>
    </location>
</feature>
<feature type="compositionally biased region" description="Basic and acidic residues" evidence="2">
    <location>
        <begin position="124"/>
        <end position="133"/>
    </location>
</feature>
<feature type="compositionally biased region" description="Basic residues" evidence="2">
    <location>
        <begin position="134"/>
        <end position="146"/>
    </location>
</feature>
<feature type="compositionally biased region" description="Basic and acidic residues" evidence="2">
    <location>
        <begin position="176"/>
        <end position="187"/>
    </location>
</feature>
<feature type="compositionally biased region" description="Basic and acidic residues" evidence="2">
    <location>
        <begin position="203"/>
        <end position="219"/>
    </location>
</feature>
<keyword id="KW-0143">Chaperone</keyword>
<keyword id="KW-0963">Cytoplasm</keyword>
<keyword id="KW-0206">Cytoskeleton</keyword>
<keyword id="KW-0493">Microtubule</keyword>
<keyword id="KW-1185">Reference proteome</keyword>
<keyword id="KW-0749">Sporulation</keyword>
<comment type="function">
    <text evidence="3">Has a role in sporulation.</text>
</comment>
<comment type="subcellular location">
    <subcellularLocation>
        <location evidence="4">Cytoplasm</location>
        <location evidence="4">Cytoskeleton</location>
    </subcellularLocation>
    <text>Associates with the microtubule cytoskeleton.</text>
</comment>
<protein>
    <recommendedName>
        <fullName>Meiotically up-regulated gene 184 protein</fullName>
    </recommendedName>
</protein>
<name>MU184_SCHPO</name>
<evidence type="ECO:0000255" key="1">
    <source>
        <dbReference type="PROSITE-ProRule" id="PRU00286"/>
    </source>
</evidence>
<evidence type="ECO:0000256" key="2">
    <source>
        <dbReference type="SAM" id="MobiDB-lite"/>
    </source>
</evidence>
<evidence type="ECO:0000269" key="3">
    <source>
    </source>
</evidence>
<evidence type="ECO:0000269" key="4">
    <source>
    </source>
</evidence>
<gene>
    <name type="primary">mug184</name>
    <name type="ORF">SPBC1773.09c</name>
</gene>
<accession>O94566</accession>